<gene>
    <name type="ordered locus">CPE1954</name>
</gene>
<proteinExistence type="inferred from homology"/>
<dbReference type="EMBL" id="AB028630">
    <property type="protein sequence ID" value="BAA81643.1"/>
    <property type="molecule type" value="Genomic_DNA"/>
</dbReference>
<dbReference type="EMBL" id="BA000016">
    <property type="protein sequence ID" value="BAB81660.1"/>
    <property type="molecule type" value="Genomic_DNA"/>
</dbReference>
<dbReference type="RefSeq" id="WP_003451771.1">
    <property type="nucleotide sequence ID" value="NC_003366.1"/>
</dbReference>
<dbReference type="SMR" id="Q9XDU4"/>
<dbReference type="STRING" id="195102.gene:10491223"/>
<dbReference type="KEGG" id="cpe:CPE1954"/>
<dbReference type="HOGENOM" id="CLU_062974_2_2_9"/>
<dbReference type="Proteomes" id="UP000000818">
    <property type="component" value="Chromosome"/>
</dbReference>
<dbReference type="GO" id="GO:0005829">
    <property type="term" value="C:cytosol"/>
    <property type="evidence" value="ECO:0007669"/>
    <property type="project" value="TreeGrafter"/>
</dbReference>
<dbReference type="GO" id="GO:0003677">
    <property type="term" value="F:DNA binding"/>
    <property type="evidence" value="ECO:0007669"/>
    <property type="project" value="UniProtKB-UniRule"/>
</dbReference>
<dbReference type="GO" id="GO:0006355">
    <property type="term" value="P:regulation of DNA-templated transcription"/>
    <property type="evidence" value="ECO:0007669"/>
    <property type="project" value="UniProtKB-UniRule"/>
</dbReference>
<dbReference type="FunFam" id="1.10.10.200:FF:000002">
    <property type="entry name" value="Probable transcriptional regulatory protein CLM62_37755"/>
    <property type="match status" value="1"/>
</dbReference>
<dbReference type="FunFam" id="3.30.70.980:FF:000002">
    <property type="entry name" value="Probable transcriptional regulatory protein YebC"/>
    <property type="match status" value="1"/>
</dbReference>
<dbReference type="Gene3D" id="1.10.10.200">
    <property type="match status" value="1"/>
</dbReference>
<dbReference type="Gene3D" id="3.30.70.980">
    <property type="match status" value="2"/>
</dbReference>
<dbReference type="HAMAP" id="MF_00693">
    <property type="entry name" value="Transcrip_reg_TACO1"/>
    <property type="match status" value="1"/>
</dbReference>
<dbReference type="InterPro" id="IPR017856">
    <property type="entry name" value="Integrase-like_N"/>
</dbReference>
<dbReference type="InterPro" id="IPR048300">
    <property type="entry name" value="TACO1_YebC-like_2nd/3rd_dom"/>
</dbReference>
<dbReference type="InterPro" id="IPR049083">
    <property type="entry name" value="TACO1_YebC_N"/>
</dbReference>
<dbReference type="InterPro" id="IPR002876">
    <property type="entry name" value="Transcrip_reg_TACO1-like"/>
</dbReference>
<dbReference type="InterPro" id="IPR026564">
    <property type="entry name" value="Transcrip_reg_TACO1-like_dom3"/>
</dbReference>
<dbReference type="InterPro" id="IPR029072">
    <property type="entry name" value="YebC-like"/>
</dbReference>
<dbReference type="NCBIfam" id="NF001030">
    <property type="entry name" value="PRK00110.1"/>
    <property type="match status" value="1"/>
</dbReference>
<dbReference type="NCBIfam" id="NF009044">
    <property type="entry name" value="PRK12378.1"/>
    <property type="match status" value="1"/>
</dbReference>
<dbReference type="NCBIfam" id="TIGR01033">
    <property type="entry name" value="YebC/PmpR family DNA-binding transcriptional regulator"/>
    <property type="match status" value="1"/>
</dbReference>
<dbReference type="PANTHER" id="PTHR12532:SF6">
    <property type="entry name" value="TRANSCRIPTIONAL REGULATORY PROTEIN YEBC-RELATED"/>
    <property type="match status" value="1"/>
</dbReference>
<dbReference type="PANTHER" id="PTHR12532">
    <property type="entry name" value="TRANSLATIONAL ACTIVATOR OF CYTOCHROME C OXIDASE 1"/>
    <property type="match status" value="1"/>
</dbReference>
<dbReference type="Pfam" id="PF20772">
    <property type="entry name" value="TACO1_YebC_N"/>
    <property type="match status" value="1"/>
</dbReference>
<dbReference type="Pfam" id="PF01709">
    <property type="entry name" value="Transcrip_reg"/>
    <property type="match status" value="1"/>
</dbReference>
<dbReference type="SUPFAM" id="SSF75625">
    <property type="entry name" value="YebC-like"/>
    <property type="match status" value="1"/>
</dbReference>
<evidence type="ECO:0000255" key="1">
    <source>
        <dbReference type="HAMAP-Rule" id="MF_00693"/>
    </source>
</evidence>
<sequence>MSGHSKWHNIQAKKGKMDAKRGKIFTKIGKEIAVAVKEGGANLDGNSRLKDAVAKAKAANMPNDNIQRAIKKAAGEGDSVNYESIVYEGYGPSGVAVMVEVLTDNKNRSAGNVRSAFTKGGGNMGTSGCVGFMFQKKGEIVIEKAELDEDEIMMMALDAGAEDFASEEEVFIVTTSPEDFGTVREALEAEGLEFLEAAVKMIPDTETAINEDDAKKFQKMLDLLEDDDDVQEVYHNAEFPEGWDE</sequence>
<feature type="chain" id="PRO_0000175790" description="Probable transcriptional regulatory protein CPE1954">
    <location>
        <begin position="1"/>
        <end position="245"/>
    </location>
</feature>
<protein>
    <recommendedName>
        <fullName evidence="1">Probable transcriptional regulatory protein CPE1954</fullName>
    </recommendedName>
    <alternativeName>
        <fullName>Hyp27</fullName>
    </alternativeName>
</protein>
<reference key="1">
    <citation type="journal article" date="2000" name="Mol. Microbiol.">
        <title>Identification of novel VirR/VirS-regulated genes in Clostridium perfringens.</title>
        <authorList>
            <person name="Banu S."/>
            <person name="Ohtani K."/>
            <person name="Yaguchi H."/>
            <person name="Swe T."/>
            <person name="Cole S.T."/>
            <person name="Hayashi H."/>
            <person name="Shimizu T."/>
        </authorList>
    </citation>
    <scope>NUCLEOTIDE SEQUENCE [GENOMIC DNA]</scope>
    <source>
        <strain>13 / Type A</strain>
    </source>
</reference>
<reference key="2">
    <citation type="journal article" date="2002" name="Proc. Natl. Acad. Sci. U.S.A.">
        <title>Complete genome sequence of Clostridium perfringens, an anaerobic flesh-eater.</title>
        <authorList>
            <person name="Shimizu T."/>
            <person name="Ohtani K."/>
            <person name="Hirakawa H."/>
            <person name="Ohshima K."/>
            <person name="Yamashita A."/>
            <person name="Shiba T."/>
            <person name="Ogasawara N."/>
            <person name="Hattori M."/>
            <person name="Kuhara S."/>
            <person name="Hayashi H."/>
        </authorList>
    </citation>
    <scope>NUCLEOTIDE SEQUENCE [LARGE SCALE GENOMIC DNA]</scope>
    <source>
        <strain>13 / Type A</strain>
    </source>
</reference>
<keyword id="KW-0963">Cytoplasm</keyword>
<keyword id="KW-0238">DNA-binding</keyword>
<keyword id="KW-1185">Reference proteome</keyword>
<keyword id="KW-0804">Transcription</keyword>
<keyword id="KW-0805">Transcription regulation</keyword>
<comment type="subcellular location">
    <subcellularLocation>
        <location evidence="1">Cytoplasm</location>
    </subcellularLocation>
</comment>
<comment type="similarity">
    <text evidence="1">Belongs to the TACO1 family.</text>
</comment>
<name>Y1954_CLOPE</name>
<organism>
    <name type="scientific">Clostridium perfringens (strain 13 / Type A)</name>
    <dbReference type="NCBI Taxonomy" id="195102"/>
    <lineage>
        <taxon>Bacteria</taxon>
        <taxon>Bacillati</taxon>
        <taxon>Bacillota</taxon>
        <taxon>Clostridia</taxon>
        <taxon>Eubacteriales</taxon>
        <taxon>Clostridiaceae</taxon>
        <taxon>Clostridium</taxon>
    </lineage>
</organism>
<accession>Q9XDU4</accession>